<protein>
    <recommendedName>
        <fullName evidence="1">UvrABC system protein C</fullName>
        <shortName evidence="1">Protein UvrC</shortName>
    </recommendedName>
    <alternativeName>
        <fullName evidence="1">Excinuclease ABC subunit C</fullName>
    </alternativeName>
</protein>
<keyword id="KW-0963">Cytoplasm</keyword>
<keyword id="KW-0227">DNA damage</keyword>
<keyword id="KW-0228">DNA excision</keyword>
<keyword id="KW-0234">DNA repair</keyword>
<keyword id="KW-0267">Excision nuclease</keyword>
<keyword id="KW-0742">SOS response</keyword>
<reference key="1">
    <citation type="submission" date="2007-06" db="EMBL/GenBank/DDBJ databases">
        <title>Complete sequence of chromosome of Staphylococcus aureus subsp. aureus JH1.</title>
        <authorList>
            <consortium name="US DOE Joint Genome Institute"/>
            <person name="Copeland A."/>
            <person name="Lucas S."/>
            <person name="Lapidus A."/>
            <person name="Barry K."/>
            <person name="Detter J.C."/>
            <person name="Glavina del Rio T."/>
            <person name="Hammon N."/>
            <person name="Israni S."/>
            <person name="Dalin E."/>
            <person name="Tice H."/>
            <person name="Pitluck S."/>
            <person name="Chain P."/>
            <person name="Malfatti S."/>
            <person name="Shin M."/>
            <person name="Vergez L."/>
            <person name="Schmutz J."/>
            <person name="Larimer F."/>
            <person name="Land M."/>
            <person name="Hauser L."/>
            <person name="Kyrpides N."/>
            <person name="Ivanova N."/>
            <person name="Tomasz A."/>
            <person name="Richardson P."/>
        </authorList>
    </citation>
    <scope>NUCLEOTIDE SEQUENCE [LARGE SCALE GENOMIC DNA]</scope>
    <source>
        <strain>JH1</strain>
    </source>
</reference>
<dbReference type="EMBL" id="CP000736">
    <property type="protein sequence ID" value="ABR52081.1"/>
    <property type="molecule type" value="Genomic_DNA"/>
</dbReference>
<dbReference type="SMR" id="A6U0W3"/>
<dbReference type="KEGG" id="sah:SaurJH1_1227"/>
<dbReference type="HOGENOM" id="CLU_014841_3_2_9"/>
<dbReference type="GO" id="GO:0005737">
    <property type="term" value="C:cytoplasm"/>
    <property type="evidence" value="ECO:0007669"/>
    <property type="project" value="UniProtKB-SubCell"/>
</dbReference>
<dbReference type="GO" id="GO:0009380">
    <property type="term" value="C:excinuclease repair complex"/>
    <property type="evidence" value="ECO:0007669"/>
    <property type="project" value="InterPro"/>
</dbReference>
<dbReference type="GO" id="GO:0003677">
    <property type="term" value="F:DNA binding"/>
    <property type="evidence" value="ECO:0007669"/>
    <property type="project" value="UniProtKB-UniRule"/>
</dbReference>
<dbReference type="GO" id="GO:0009381">
    <property type="term" value="F:excinuclease ABC activity"/>
    <property type="evidence" value="ECO:0007669"/>
    <property type="project" value="UniProtKB-UniRule"/>
</dbReference>
<dbReference type="GO" id="GO:0006289">
    <property type="term" value="P:nucleotide-excision repair"/>
    <property type="evidence" value="ECO:0007669"/>
    <property type="project" value="UniProtKB-UniRule"/>
</dbReference>
<dbReference type="GO" id="GO:0009432">
    <property type="term" value="P:SOS response"/>
    <property type="evidence" value="ECO:0007669"/>
    <property type="project" value="UniProtKB-UniRule"/>
</dbReference>
<dbReference type="CDD" id="cd10434">
    <property type="entry name" value="GIY-YIG_UvrC_Cho"/>
    <property type="match status" value="1"/>
</dbReference>
<dbReference type="FunFam" id="3.30.420.340:FF:000002">
    <property type="entry name" value="UvrABC system protein C"/>
    <property type="match status" value="1"/>
</dbReference>
<dbReference type="FunFam" id="3.40.1440.10:FF:000001">
    <property type="entry name" value="UvrABC system protein C"/>
    <property type="match status" value="1"/>
</dbReference>
<dbReference type="FunFam" id="4.10.860.10:FF:000007">
    <property type="entry name" value="UvrABC system protein C"/>
    <property type="match status" value="1"/>
</dbReference>
<dbReference type="Gene3D" id="1.10.150.20">
    <property type="entry name" value="5' to 3' exonuclease, C-terminal subdomain"/>
    <property type="match status" value="1"/>
</dbReference>
<dbReference type="Gene3D" id="3.40.1440.10">
    <property type="entry name" value="GIY-YIG endonuclease"/>
    <property type="match status" value="1"/>
</dbReference>
<dbReference type="Gene3D" id="4.10.860.10">
    <property type="entry name" value="UVR domain"/>
    <property type="match status" value="1"/>
</dbReference>
<dbReference type="Gene3D" id="3.30.420.340">
    <property type="entry name" value="UvrC, RNAse H endonuclease domain"/>
    <property type="match status" value="1"/>
</dbReference>
<dbReference type="HAMAP" id="MF_00203">
    <property type="entry name" value="UvrC"/>
    <property type="match status" value="1"/>
</dbReference>
<dbReference type="InterPro" id="IPR000305">
    <property type="entry name" value="GIY-YIG_endonuc"/>
</dbReference>
<dbReference type="InterPro" id="IPR035901">
    <property type="entry name" value="GIY-YIG_endonuc_sf"/>
</dbReference>
<dbReference type="InterPro" id="IPR047296">
    <property type="entry name" value="GIY-YIG_UvrC_Cho"/>
</dbReference>
<dbReference type="InterPro" id="IPR010994">
    <property type="entry name" value="RuvA_2-like"/>
</dbReference>
<dbReference type="InterPro" id="IPR001943">
    <property type="entry name" value="UVR_dom"/>
</dbReference>
<dbReference type="InterPro" id="IPR036876">
    <property type="entry name" value="UVR_dom_sf"/>
</dbReference>
<dbReference type="InterPro" id="IPR050066">
    <property type="entry name" value="UvrABC_protein_C"/>
</dbReference>
<dbReference type="InterPro" id="IPR004791">
    <property type="entry name" value="UvrC"/>
</dbReference>
<dbReference type="InterPro" id="IPR001162">
    <property type="entry name" value="UvrC_RNase_H_dom"/>
</dbReference>
<dbReference type="InterPro" id="IPR038476">
    <property type="entry name" value="UvrC_RNase_H_dom_sf"/>
</dbReference>
<dbReference type="NCBIfam" id="TIGR00194">
    <property type="entry name" value="uvrC"/>
    <property type="match status" value="1"/>
</dbReference>
<dbReference type="PANTHER" id="PTHR30562:SF1">
    <property type="entry name" value="UVRABC SYSTEM PROTEIN C"/>
    <property type="match status" value="1"/>
</dbReference>
<dbReference type="PANTHER" id="PTHR30562">
    <property type="entry name" value="UVRC/OXIDOREDUCTASE"/>
    <property type="match status" value="1"/>
</dbReference>
<dbReference type="Pfam" id="PF01541">
    <property type="entry name" value="GIY-YIG"/>
    <property type="match status" value="1"/>
</dbReference>
<dbReference type="Pfam" id="PF02151">
    <property type="entry name" value="UVR"/>
    <property type="match status" value="1"/>
</dbReference>
<dbReference type="Pfam" id="PF22920">
    <property type="entry name" value="UvrC_RNaseH"/>
    <property type="match status" value="1"/>
</dbReference>
<dbReference type="Pfam" id="PF08459">
    <property type="entry name" value="UvrC_RNaseH_dom"/>
    <property type="match status" value="1"/>
</dbReference>
<dbReference type="SMART" id="SM00465">
    <property type="entry name" value="GIYc"/>
    <property type="match status" value="1"/>
</dbReference>
<dbReference type="SUPFAM" id="SSF46600">
    <property type="entry name" value="C-terminal UvrC-binding domain of UvrB"/>
    <property type="match status" value="1"/>
</dbReference>
<dbReference type="SUPFAM" id="SSF82771">
    <property type="entry name" value="GIY-YIG endonuclease"/>
    <property type="match status" value="1"/>
</dbReference>
<dbReference type="SUPFAM" id="SSF47781">
    <property type="entry name" value="RuvA domain 2-like"/>
    <property type="match status" value="1"/>
</dbReference>
<dbReference type="PROSITE" id="PS50164">
    <property type="entry name" value="GIY_YIG"/>
    <property type="match status" value="1"/>
</dbReference>
<dbReference type="PROSITE" id="PS50151">
    <property type="entry name" value="UVR"/>
    <property type="match status" value="1"/>
</dbReference>
<dbReference type="PROSITE" id="PS50165">
    <property type="entry name" value="UVRC"/>
    <property type="match status" value="1"/>
</dbReference>
<organism>
    <name type="scientific">Staphylococcus aureus (strain JH1)</name>
    <dbReference type="NCBI Taxonomy" id="359787"/>
    <lineage>
        <taxon>Bacteria</taxon>
        <taxon>Bacillati</taxon>
        <taxon>Bacillota</taxon>
        <taxon>Bacilli</taxon>
        <taxon>Bacillales</taxon>
        <taxon>Staphylococcaceae</taxon>
        <taxon>Staphylococcus</taxon>
    </lineage>
</organism>
<feature type="chain" id="PRO_1000077846" description="UvrABC system protein C">
    <location>
        <begin position="1"/>
        <end position="593"/>
    </location>
</feature>
<feature type="domain" description="GIY-YIG" evidence="1">
    <location>
        <begin position="17"/>
        <end position="94"/>
    </location>
</feature>
<feature type="domain" description="UVR" evidence="1">
    <location>
        <begin position="199"/>
        <end position="234"/>
    </location>
</feature>
<sequence>MEDYKQRIKNKLNVVPMEPGCYLMKDRNDQVIYVGKAKKLRNRLRSYFTGAHDAKTTRLVGEIRRFEFIVTSSETESLLLELNLIKQYQPRYNILLKDDKSYPFIKITKEKYPRLLVTRTVKQGTGKYFGPYPNAYSAQETKKLLDRIYPYRKCDKMPDKLCLYYHIGQCLGPCVYDVDLSKYAQMTKEITDFLNGEDKTILKSLEERMLTASESLDFERAKEYRDLIQHIQNLTNKQKIMSSDKTIRDVFGYCVDKGWMCIQVFFIRQGNMIKRDTTMIPLQQTEEEEFYTFIGQFYSLNQHILPKEVHVPRNLDKEMIQSVVDTKIVQPARGPKKDMVDLAAHNAKVSLNNKFELISRDESRTIKAIEELGTQMGIQTPIRIEAFDNSNIQGVDPVSAMVTFVDGKPDKKNYRKYKIKTVKGPDDYKSMREVVRRRYSRVLNEGLPLPDLIIVDGGKGHMNGVIDVLQNELGLDIPVAGLQKNDKHQTSELLYGASAEIVPLKKNSQAFYLLHRIQDEVHRFAITFHRQTRQKTGLKSILDDIDGIGNKRKTLLLRSFGSIKKMKEATLEDFKNIGIPENVAKNLHEQLHK</sequence>
<accession>A6U0W3</accession>
<name>UVRC_STAA2</name>
<evidence type="ECO:0000255" key="1">
    <source>
        <dbReference type="HAMAP-Rule" id="MF_00203"/>
    </source>
</evidence>
<gene>
    <name evidence="1" type="primary">uvrC</name>
    <name type="ordered locus">SaurJH1_1227</name>
</gene>
<proteinExistence type="inferred from homology"/>
<comment type="function">
    <text evidence="1">The UvrABC repair system catalyzes the recognition and processing of DNA lesions. UvrC both incises the 5' and 3' sides of the lesion. The N-terminal half is responsible for the 3' incision and the C-terminal half is responsible for the 5' incision.</text>
</comment>
<comment type="subunit">
    <text evidence="1">Interacts with UvrB in an incision complex.</text>
</comment>
<comment type="subcellular location">
    <subcellularLocation>
        <location evidence="1">Cytoplasm</location>
    </subcellularLocation>
</comment>
<comment type="similarity">
    <text evidence="1">Belongs to the UvrC family.</text>
</comment>